<sequence length="438" mass="48004">MAALVVSETAEPGSRVGPGRGRISRGRLANQIPPEVLNNPQLQAAVQVLPSNYNFEIPKTIWRIQQAQAKKVALQMPEGLLLFACTIVDILERFTEAEVMVMGDVTYGACCVDDFTARALGVDFLVHYGHSCLVPMDTSVQDFRVLYVFVDIRIDTAHLLDSVRLTFTPGSSLALVSTIQFVSTLQAAAQELKADYHISVPQCKPLSPGEILGCTSPRLSKEVEAVVYLGDGRFHLESVMIANPNIPAYRYDPYGKVLSREYYDHQRMQATRQEAIAAARSAKSWGLILGTLGRQGSPKILEHLESQLRNLGLPFVRLLLSEIFPSKLSLLPEVDVWVQVACPRLSIDWGSAFPKPLLTPYEAAVALKDISWQQPYPMDFYSGSSLGPWTVNYGRDRAPRGLCQPASDKVQQGSRGGSPAPACESCNCADQKATSPAP</sequence>
<proteinExistence type="evidence at protein level"/>
<reference key="1">
    <citation type="journal article" date="2001" name="Biochem. Biophys. Res. Commun.">
        <title>Cloning, structure, and expression of the mouse Ovca1 gene.</title>
        <authorList>
            <person name="Chen C.-M."/>
            <person name="Behringer R.R."/>
        </authorList>
    </citation>
    <scope>NUCLEOTIDE SEQUENCE [MRNA]</scope>
    <scope>SUBCELLULAR LOCATION</scope>
    <scope>TISSUE SPECIFICITY</scope>
    <scope>DEVELOPMENTAL STAGE</scope>
    <source>
        <strain>C57BL/6J</strain>
        <tissue>Embryo</tissue>
    </source>
</reference>
<reference key="2">
    <citation type="journal article" date="2009" name="PLoS Biol.">
        <title>Lineage-specific biology revealed by a finished genome assembly of the mouse.</title>
        <authorList>
            <person name="Church D.M."/>
            <person name="Goodstadt L."/>
            <person name="Hillier L.W."/>
            <person name="Zody M.C."/>
            <person name="Goldstein S."/>
            <person name="She X."/>
            <person name="Bult C.J."/>
            <person name="Agarwala R."/>
            <person name="Cherry J.L."/>
            <person name="DiCuccio M."/>
            <person name="Hlavina W."/>
            <person name="Kapustin Y."/>
            <person name="Meric P."/>
            <person name="Maglott D."/>
            <person name="Birtle Z."/>
            <person name="Marques A.C."/>
            <person name="Graves T."/>
            <person name="Zhou S."/>
            <person name="Teague B."/>
            <person name="Potamousis K."/>
            <person name="Churas C."/>
            <person name="Place M."/>
            <person name="Herschleb J."/>
            <person name="Runnheim R."/>
            <person name="Forrest D."/>
            <person name="Amos-Landgraf J."/>
            <person name="Schwartz D.C."/>
            <person name="Cheng Z."/>
            <person name="Lindblad-Toh K."/>
            <person name="Eichler E.E."/>
            <person name="Ponting C.P."/>
        </authorList>
    </citation>
    <scope>NUCLEOTIDE SEQUENCE [LARGE SCALE GENOMIC DNA]</scope>
    <source>
        <strain>C57BL/6J</strain>
    </source>
</reference>
<reference key="3">
    <citation type="journal article" date="2004" name="Genome Res.">
        <title>The status, quality, and expansion of the NIH full-length cDNA project: the Mammalian Gene Collection (MGC).</title>
        <authorList>
            <consortium name="The MGC Project Team"/>
        </authorList>
    </citation>
    <scope>NUCLEOTIDE SEQUENCE [LARGE SCALE MRNA] OF 3-438</scope>
    <source>
        <strain>FVB/N</strain>
        <tissue>Mammary tumor</tissue>
    </source>
</reference>
<reference key="4">
    <citation type="journal article" date="2004" name="Genes Dev.">
        <title>Ovca1 regulates cell proliferation, embryonic development, and tumorigenesis.</title>
        <authorList>
            <person name="Chen C.-M."/>
            <person name="Behringer R.R."/>
        </authorList>
    </citation>
    <scope>FUNCTION</scope>
    <scope>DISRUPTION PHENOTYPE</scope>
</reference>
<reference key="5">
    <citation type="journal article" date="2004" name="Mol. Cell. Biol.">
        <title>Identification of the proteins required for biosynthesis of diphthamide, the target of bacterial ADP-ribosylating toxins on translation elongation factor 2.</title>
        <authorList>
            <person name="Liu S."/>
            <person name="Milne G.T."/>
            <person name="Kuremsky J.G."/>
            <person name="Fink G.R."/>
            <person name="Leppla S.H."/>
        </authorList>
    </citation>
    <scope>FUNCTION</scope>
    <scope>INTERACTION WITH DPH2</scope>
</reference>
<reference key="6">
    <citation type="journal article" date="2005" name="Curr. Opin. Genet. Dev.">
        <title>OVCA1: tumor suppressor gene.</title>
        <authorList>
            <person name="Chen C.M."/>
            <person name="Behringer R.R."/>
        </authorList>
    </citation>
    <scope>FUNCTION</scope>
</reference>
<reference key="7">
    <citation type="journal article" date="2010" name="Cell">
        <title>A tissue-specific atlas of mouse protein phosphorylation and expression.</title>
        <authorList>
            <person name="Huttlin E.L."/>
            <person name="Jedrychowski M.P."/>
            <person name="Elias J.E."/>
            <person name="Goswami T."/>
            <person name="Rad R."/>
            <person name="Beausoleil S.A."/>
            <person name="Villen J."/>
            <person name="Haas W."/>
            <person name="Sowa M.E."/>
            <person name="Gygi S.P."/>
        </authorList>
    </citation>
    <scope>PHOSPHORYLATION [LARGE SCALE ANALYSIS] AT SER-418</scope>
    <scope>IDENTIFICATION BY MASS SPECTROMETRY [LARGE SCALE ANALYSIS]</scope>
    <source>
        <tissue>Kidney</tissue>
        <tissue>Liver</tissue>
        <tissue>Spleen</tissue>
        <tissue>Testis</tissue>
    </source>
</reference>
<reference key="8">
    <citation type="journal article" date="2010" name="PLoS ONE">
        <title>A dominant-negative approach that prevents diphthamide formation confers resistance to Pseudomonas exotoxin A and diphtheria toxin.</title>
        <authorList>
            <person name="Roy V."/>
            <person name="Ghani K."/>
            <person name="Caruso M."/>
        </authorList>
    </citation>
    <scope>INTERACTION WITH DPH2</scope>
</reference>
<reference key="9">
    <citation type="journal article" date="2014" name="Hum. Mol. Genet.">
        <title>Role of OVCA1/DPH1 in craniofacial abnormalities of Miller-Dieker syndrome.</title>
        <authorList>
            <person name="Yu Y.R."/>
            <person name="You L.R."/>
            <person name="Yan Y.T."/>
            <person name="Chen C.M."/>
        </authorList>
    </citation>
    <scope>FUNCTION</scope>
    <scope>DEVELOPMENTAL STAGE</scope>
    <scope>DISRUPTION PHENOTYPE</scope>
</reference>
<comment type="function">
    <text evidence="2 6 7 8 10">Catalyzes the first step of diphthamide biosynthesis, a post-translational modification of histidine which occurs in elongation factor 2 (PubMed:15485916, PubMed:24895408). DPH1 and DPH2 transfer a 3-amino-3-carboxypropyl (ACP) group from S-adenosyl-L-methionine (SAM) to a histidine residue, the reaction is assisted by a reduction system comprising DPH3 and a NADH-dependent reductase (By similarity). Acts as a tumor suppressor (PubMed:14744934, PubMed:15661533, PubMed:24895408).</text>
</comment>
<comment type="catalytic activity">
    <reaction evidence="14">
        <text>L-histidyl-[translation elongation factor 2] + S-adenosyl-L-methionine = 2-[(3S)-amino-3-carboxypropyl]-L-histidyl-[translation elongation factor 2] + S-methyl-5'-thioadenosine + H(+)</text>
        <dbReference type="Rhea" id="RHEA:36783"/>
        <dbReference type="Rhea" id="RHEA-COMP:9748"/>
        <dbReference type="Rhea" id="RHEA-COMP:9749"/>
        <dbReference type="ChEBI" id="CHEBI:15378"/>
        <dbReference type="ChEBI" id="CHEBI:17509"/>
        <dbReference type="ChEBI" id="CHEBI:29979"/>
        <dbReference type="ChEBI" id="CHEBI:59789"/>
        <dbReference type="ChEBI" id="CHEBI:73995"/>
        <dbReference type="EC" id="2.5.1.108"/>
    </reaction>
</comment>
<comment type="cofactor">
    <cofactor evidence="2">
        <name>[4Fe-4S] cluster</name>
        <dbReference type="ChEBI" id="CHEBI:49883"/>
    </cofactor>
    <text evidence="2">Binds 1 [4Fe-4S] cluster per subunit. The cluster is coordinated with 3 cysteines and an exchangeable S-adenosyl-L-methionine.</text>
</comment>
<comment type="pathway">
    <text>Protein modification; peptidyl-diphthamide biosynthesis.</text>
</comment>
<comment type="subunit">
    <text evidence="2 3 7 9">Component of the 2-(3-amino-3-carboxypropyl)histidine synthase complex composed of DPH1, DPH2, DPH3 and a NADH-dependent reductase (By similarity). Interacts with DPH2 (PubMed:15485916, PubMed:21203470). Interacts with RBM8A (By similarity).</text>
</comment>
<comment type="interaction">
    <interactant intactId="EBI-1561119">
        <id>Q5NCQ5</id>
    </interactant>
    <interactant intactId="EBI-1561134">
        <id>Q9CR25</id>
        <label>Dph2</label>
    </interactant>
    <organismsDiffer>false</organismsDiffer>
    <experiments>2</experiments>
</comment>
<comment type="subcellular location">
    <subcellularLocation>
        <location evidence="5">Nucleus</location>
    </subcellularLocation>
    <subcellularLocation>
        <location evidence="5">Cytoplasm</location>
    </subcellularLocation>
    <text>Punctate, primarily perinuclear localization.</text>
</comment>
<comment type="tissue specificity">
    <text evidence="5">Strongly expressed in kidney and liver. Moderately expressed in brain, skin and testis. Weakly expressed in heart, lung, small intestine, spleen, stomach and thymus.</text>
</comment>
<comment type="developmental stage">
    <text evidence="5 10">Expressed in heart, neural tube, forebrain, mandible, tongue and body walls at 10.5 to 14.5 dpc (at protein level) (PubMed:24895408). Expressed in lung, stomach, brain, heart, kidney and gonads at 14.5 dpc (PubMed:11527402).</text>
</comment>
<comment type="disruption phenotype">
    <text evidence="6 10">Global developmental delay (PubMed:14744934, PubMed:24895408). Abnormal palatogenesis; palatine bone absent, micrognathia, cleft palate and small skull (PubMed:14744934, PubMed:24895408). Results in death during gestation or soon after birth with a small body size (PubMed:14744934). May also result in preaxial polydactyly of the right hindlimb and abnormal hepatic development (PubMed:14744934). Knockout mice leads to an increased frequency of tumor formation (PubMed:14744934, PubMed:24895408).</text>
</comment>
<comment type="similarity">
    <text evidence="13">Belongs to the DPH1/DPH2 family. DPH1 subfamily.</text>
</comment>
<keyword id="KW-0963">Cytoplasm</keyword>
<keyword id="KW-0408">Iron</keyword>
<keyword id="KW-0411">Iron-sulfur</keyword>
<keyword id="KW-0479">Metal-binding</keyword>
<keyword id="KW-0539">Nucleus</keyword>
<keyword id="KW-0597">Phosphoprotein</keyword>
<keyword id="KW-1185">Reference proteome</keyword>
<keyword id="KW-0949">S-adenosyl-L-methionine</keyword>
<keyword id="KW-0808">Transferase</keyword>
<keyword id="KW-0043">Tumor suppressor</keyword>
<organism>
    <name type="scientific">Mus musculus</name>
    <name type="common">Mouse</name>
    <dbReference type="NCBI Taxonomy" id="10090"/>
    <lineage>
        <taxon>Eukaryota</taxon>
        <taxon>Metazoa</taxon>
        <taxon>Chordata</taxon>
        <taxon>Craniata</taxon>
        <taxon>Vertebrata</taxon>
        <taxon>Euteleostomi</taxon>
        <taxon>Mammalia</taxon>
        <taxon>Eutheria</taxon>
        <taxon>Euarchontoglires</taxon>
        <taxon>Glires</taxon>
        <taxon>Rodentia</taxon>
        <taxon>Myomorpha</taxon>
        <taxon>Muroidea</taxon>
        <taxon>Muridae</taxon>
        <taxon>Murinae</taxon>
        <taxon>Mus</taxon>
        <taxon>Mus</taxon>
    </lineage>
</organism>
<gene>
    <name evidence="12" type="primary">Dph1</name>
    <name type="synonym">Dph2l1</name>
    <name evidence="11" type="synonym">Ovca1</name>
</gene>
<accession>Q5NCQ5</accession>
<accession>Q80UX6</accession>
<accession>Q8R445</accession>
<evidence type="ECO:0000250" key="1">
    <source>
        <dbReference type="UniProtKB" id="O58832"/>
    </source>
</evidence>
<evidence type="ECO:0000250" key="2">
    <source>
        <dbReference type="UniProtKB" id="P40487"/>
    </source>
</evidence>
<evidence type="ECO:0000250" key="3">
    <source>
        <dbReference type="UniProtKB" id="Q9BZG8"/>
    </source>
</evidence>
<evidence type="ECO:0000256" key="4">
    <source>
        <dbReference type="SAM" id="MobiDB-lite"/>
    </source>
</evidence>
<evidence type="ECO:0000269" key="5">
    <source>
    </source>
</evidence>
<evidence type="ECO:0000269" key="6">
    <source>
    </source>
</evidence>
<evidence type="ECO:0000269" key="7">
    <source>
    </source>
</evidence>
<evidence type="ECO:0000269" key="8">
    <source>
    </source>
</evidence>
<evidence type="ECO:0000269" key="9">
    <source>
    </source>
</evidence>
<evidence type="ECO:0000269" key="10">
    <source>
    </source>
</evidence>
<evidence type="ECO:0000303" key="11">
    <source>
    </source>
</evidence>
<evidence type="ECO:0000303" key="12">
    <source>
    </source>
</evidence>
<evidence type="ECO:0000305" key="13"/>
<evidence type="ECO:0000305" key="14">
    <source>
    </source>
</evidence>
<evidence type="ECO:0007744" key="15">
    <source>
    </source>
</evidence>
<dbReference type="EC" id="2.5.1.108" evidence="14"/>
<dbReference type="EMBL" id="AY078170">
    <property type="protein sequence ID" value="AAM14629.1"/>
    <property type="molecule type" value="mRNA"/>
</dbReference>
<dbReference type="EMBL" id="AL603905">
    <property type="status" value="NOT_ANNOTATED_CDS"/>
    <property type="molecule type" value="Genomic_DNA"/>
</dbReference>
<dbReference type="EMBL" id="BC044663">
    <property type="protein sequence ID" value="AAH44663.1"/>
    <property type="molecule type" value="mRNA"/>
</dbReference>
<dbReference type="CCDS" id="CCDS25042.1"/>
<dbReference type="PIR" id="JC7758">
    <property type="entry name" value="JC7758"/>
</dbReference>
<dbReference type="RefSeq" id="NP_652762.2">
    <property type="nucleotide sequence ID" value="NM_144491.2"/>
</dbReference>
<dbReference type="SMR" id="Q5NCQ5"/>
<dbReference type="FunCoup" id="Q5NCQ5">
    <property type="interactions" value="2028"/>
</dbReference>
<dbReference type="IntAct" id="Q5NCQ5">
    <property type="interactions" value="1"/>
</dbReference>
<dbReference type="STRING" id="10090.ENSMUSP00000042162"/>
<dbReference type="iPTMnet" id="Q5NCQ5"/>
<dbReference type="PhosphoSitePlus" id="Q5NCQ5"/>
<dbReference type="SwissPalm" id="Q5NCQ5"/>
<dbReference type="PaxDb" id="10090-ENSMUSP00000042162"/>
<dbReference type="PeptideAtlas" id="Q5NCQ5"/>
<dbReference type="ProteomicsDB" id="277381"/>
<dbReference type="Pumba" id="Q5NCQ5"/>
<dbReference type="Antibodypedia" id="22821">
    <property type="antibodies" value="206 antibodies from 24 providers"/>
</dbReference>
<dbReference type="DNASU" id="116905"/>
<dbReference type="Ensembl" id="ENSMUST00000044949.11">
    <property type="protein sequence ID" value="ENSMUSP00000042162.5"/>
    <property type="gene ID" value="ENSMUSG00000078789.10"/>
</dbReference>
<dbReference type="GeneID" id="116905"/>
<dbReference type="KEGG" id="mmu:116905"/>
<dbReference type="UCSC" id="uc007kdg.1">
    <property type="organism name" value="mouse"/>
</dbReference>
<dbReference type="AGR" id="MGI:2151233"/>
<dbReference type="CTD" id="1801"/>
<dbReference type="MGI" id="MGI:2151233">
    <property type="gene designation" value="Dph1"/>
</dbReference>
<dbReference type="VEuPathDB" id="HostDB:ENSMUSG00000078789"/>
<dbReference type="eggNOG" id="KOG2648">
    <property type="taxonomic scope" value="Eukaryota"/>
</dbReference>
<dbReference type="GeneTree" id="ENSGT00940000153694"/>
<dbReference type="HOGENOM" id="CLU_037146_1_2_1"/>
<dbReference type="InParanoid" id="Q5NCQ5"/>
<dbReference type="OMA" id="PGQVLGC"/>
<dbReference type="OrthoDB" id="1649088at2759"/>
<dbReference type="PhylomeDB" id="Q5NCQ5"/>
<dbReference type="TreeFam" id="TF105746"/>
<dbReference type="Reactome" id="R-MMU-5358493">
    <property type="pathway name" value="Synthesis of diphthamide-EEF2"/>
</dbReference>
<dbReference type="UniPathway" id="UPA00559"/>
<dbReference type="BioGRID-ORCS" id="116905">
    <property type="hits" value="14 hits in 77 CRISPR screens"/>
</dbReference>
<dbReference type="ChiTaRS" id="Dph1">
    <property type="organism name" value="mouse"/>
</dbReference>
<dbReference type="PRO" id="PR:Q5NCQ5"/>
<dbReference type="Proteomes" id="UP000000589">
    <property type="component" value="Chromosome 11"/>
</dbReference>
<dbReference type="RNAct" id="Q5NCQ5">
    <property type="molecule type" value="protein"/>
</dbReference>
<dbReference type="Bgee" id="ENSMUSG00000078789">
    <property type="expression patterns" value="Expressed in proximal tubule and 62 other cell types or tissues"/>
</dbReference>
<dbReference type="ExpressionAtlas" id="Q5NCQ5">
    <property type="expression patterns" value="baseline and differential"/>
</dbReference>
<dbReference type="GO" id="GO:0120513">
    <property type="term" value="C:2-(3-amino-3-carboxypropyl)histidine synthase complex"/>
    <property type="evidence" value="ECO:0000314"/>
    <property type="project" value="MGI"/>
</dbReference>
<dbReference type="GO" id="GO:0030054">
    <property type="term" value="C:cell junction"/>
    <property type="evidence" value="ECO:0007669"/>
    <property type="project" value="Ensembl"/>
</dbReference>
<dbReference type="GO" id="GO:0005737">
    <property type="term" value="C:cytoplasm"/>
    <property type="evidence" value="ECO:0007669"/>
    <property type="project" value="UniProtKB-SubCell"/>
</dbReference>
<dbReference type="GO" id="GO:0005654">
    <property type="term" value="C:nucleoplasm"/>
    <property type="evidence" value="ECO:0007669"/>
    <property type="project" value="Ensembl"/>
</dbReference>
<dbReference type="GO" id="GO:0032991">
    <property type="term" value="C:protein-containing complex"/>
    <property type="evidence" value="ECO:0000314"/>
    <property type="project" value="MGI"/>
</dbReference>
<dbReference type="GO" id="GO:0090560">
    <property type="term" value="F:2-(3-amino-3-carboxypropyl)histidine synthase activity"/>
    <property type="evidence" value="ECO:0000316"/>
    <property type="project" value="FlyBase"/>
</dbReference>
<dbReference type="GO" id="GO:0051539">
    <property type="term" value="F:4 iron, 4 sulfur cluster binding"/>
    <property type="evidence" value="ECO:0000250"/>
    <property type="project" value="UniProtKB"/>
</dbReference>
<dbReference type="GO" id="GO:0046872">
    <property type="term" value="F:metal ion binding"/>
    <property type="evidence" value="ECO:0007669"/>
    <property type="project" value="UniProtKB-KW"/>
</dbReference>
<dbReference type="GO" id="GO:0048144">
    <property type="term" value="P:fibroblast proliferation"/>
    <property type="evidence" value="ECO:0000315"/>
    <property type="project" value="MGI"/>
</dbReference>
<dbReference type="GO" id="GO:0017183">
    <property type="term" value="P:protein histidyl modification to diphthamide"/>
    <property type="evidence" value="ECO:0000315"/>
    <property type="project" value="UniProtKB"/>
</dbReference>
<dbReference type="FunFam" id="3.40.50.11840:FF:000001">
    <property type="entry name" value="2-(3-amino-3-carboxypropyl)histidine synthase subunit 1"/>
    <property type="match status" value="1"/>
</dbReference>
<dbReference type="FunFam" id="3.40.50.11850:FF:000001">
    <property type="entry name" value="2-(3-amino-3-carboxypropyl)histidine synthase subunit 1"/>
    <property type="match status" value="1"/>
</dbReference>
<dbReference type="FunFam" id="3.40.50.11860:FF:000002">
    <property type="entry name" value="2-(3-amino-3-carboxypropyl)histidine synthase subunit 1"/>
    <property type="match status" value="1"/>
</dbReference>
<dbReference type="Gene3D" id="3.40.50.11840">
    <property type="entry name" value="Diphthamide synthesis DPH1/DPH2 domain 1"/>
    <property type="match status" value="1"/>
</dbReference>
<dbReference type="Gene3D" id="3.40.50.11850">
    <property type="entry name" value="Diphthamide synthesis DPH1/DPH2 domain 2"/>
    <property type="match status" value="1"/>
</dbReference>
<dbReference type="Gene3D" id="3.40.50.11860">
    <property type="entry name" value="Diphthamide synthesis DPH1/DPH2 domain 3"/>
    <property type="match status" value="1"/>
</dbReference>
<dbReference type="InterPro" id="IPR016435">
    <property type="entry name" value="DPH1/DPH2"/>
</dbReference>
<dbReference type="InterPro" id="IPR042263">
    <property type="entry name" value="DPH1/DPH2_1"/>
</dbReference>
<dbReference type="InterPro" id="IPR042264">
    <property type="entry name" value="DPH1/DPH2_2"/>
</dbReference>
<dbReference type="InterPro" id="IPR042265">
    <property type="entry name" value="DPH1/DPH2_3"/>
</dbReference>
<dbReference type="NCBIfam" id="TIGR00322">
    <property type="entry name" value="diphth2_R"/>
    <property type="match status" value="1"/>
</dbReference>
<dbReference type="PANTHER" id="PTHR10762:SF1">
    <property type="entry name" value="2-(3-AMINO-3-CARBOXYPROPYL)HISTIDINE SYNTHASE SUBUNIT 1"/>
    <property type="match status" value="1"/>
</dbReference>
<dbReference type="PANTHER" id="PTHR10762">
    <property type="entry name" value="DIPHTHAMIDE BIOSYNTHESIS PROTEIN"/>
    <property type="match status" value="1"/>
</dbReference>
<dbReference type="Pfam" id="PF01866">
    <property type="entry name" value="Diphthamide_syn"/>
    <property type="match status" value="1"/>
</dbReference>
<dbReference type="SFLD" id="SFLDS00032">
    <property type="entry name" value="Radical_SAM_3-amino-3-carboxyp"/>
    <property type="match status" value="1"/>
</dbReference>
<name>DPH1_MOUSE</name>
<protein>
    <recommendedName>
        <fullName evidence="13">2-(3-amino-3-carboxypropyl)histidine synthase subunit 1</fullName>
        <ecNumber evidence="14">2.5.1.108</ecNumber>
    </recommendedName>
    <alternativeName>
        <fullName>Diphthamide biosynthesis protein 1</fullName>
    </alternativeName>
    <alternativeName>
        <fullName evidence="13">Diphtheria toxin resistance protein 1</fullName>
    </alternativeName>
    <alternativeName>
        <fullName>Ovarian cancer-associated gene 1 protein homolog</fullName>
    </alternativeName>
    <alternativeName>
        <fullName evidence="13">S-adenosyl-L-methionine:L-histidine 3-amino-3-carboxypropyltransferase 1</fullName>
    </alternativeName>
</protein>
<feature type="chain" id="PRO_0000307883" description="2-(3-amino-3-carboxypropyl)histidine synthase subunit 1">
    <location>
        <begin position="1"/>
        <end position="438"/>
    </location>
</feature>
<feature type="region of interest" description="Disordered" evidence="4">
    <location>
        <begin position="1"/>
        <end position="24"/>
    </location>
</feature>
<feature type="region of interest" description="Disordered" evidence="4">
    <location>
        <begin position="402"/>
        <end position="438"/>
    </location>
</feature>
<feature type="binding site" evidence="1">
    <location>
        <position position="110"/>
    </location>
    <ligand>
        <name>[4Fe-4S] cluster</name>
        <dbReference type="ChEBI" id="CHEBI:49883"/>
    </ligand>
</feature>
<feature type="binding site" evidence="1">
    <location>
        <position position="214"/>
    </location>
    <ligand>
        <name>[4Fe-4S] cluster</name>
        <dbReference type="ChEBI" id="CHEBI:49883"/>
    </ligand>
</feature>
<feature type="binding site" evidence="1">
    <location>
        <position position="342"/>
    </location>
    <ligand>
        <name>[4Fe-4S] cluster</name>
        <dbReference type="ChEBI" id="CHEBI:49883"/>
    </ligand>
</feature>
<feature type="modified residue" description="Phosphoserine" evidence="15">
    <location>
        <position position="418"/>
    </location>
</feature>
<feature type="sequence conflict" description="In Ref. 1; AAM14629." evidence="13" ref="1">
    <original>E</original>
    <variation>K</variation>
    <location>
        <position position="98"/>
    </location>
</feature>
<feature type="sequence conflict" description="In Ref. 1; AAM14629." evidence="13" ref="1">
    <original>P</original>
    <variation>L</variation>
    <location>
        <position position="208"/>
    </location>
</feature>
<feature type="sequence conflict" description="In Ref. 1; AAM14629." evidence="13" ref="1">
    <original>S</original>
    <variation>P</variation>
    <location>
        <position position="321"/>
    </location>
</feature>